<feature type="chain" id="PRO_1000044705" description="Altronate oxidoreductase">
    <location>
        <begin position="1"/>
        <end position="483"/>
    </location>
</feature>
<feature type="binding site" evidence="1">
    <location>
        <begin position="18"/>
        <end position="29"/>
    </location>
    <ligand>
        <name>NAD(+)</name>
        <dbReference type="ChEBI" id="CHEBI:57540"/>
    </ligand>
</feature>
<dbReference type="EC" id="1.1.1.58" evidence="1"/>
<dbReference type="EMBL" id="CP000783">
    <property type="protein sequence ID" value="ABU77078.1"/>
    <property type="molecule type" value="Genomic_DNA"/>
</dbReference>
<dbReference type="RefSeq" id="WP_012124768.1">
    <property type="nucleotide sequence ID" value="NC_009778.1"/>
</dbReference>
<dbReference type="SMR" id="A7MPR2"/>
<dbReference type="KEGG" id="esa:ESA_01824"/>
<dbReference type="PATRIC" id="fig|290339.8.peg.1626"/>
<dbReference type="HOGENOM" id="CLU_027324_1_0_6"/>
<dbReference type="UniPathway" id="UPA00246"/>
<dbReference type="Proteomes" id="UP000000260">
    <property type="component" value="Chromosome"/>
</dbReference>
<dbReference type="GO" id="GO:0005829">
    <property type="term" value="C:cytosol"/>
    <property type="evidence" value="ECO:0007669"/>
    <property type="project" value="TreeGrafter"/>
</dbReference>
<dbReference type="GO" id="GO:0008926">
    <property type="term" value="F:mannitol-1-phosphate 5-dehydrogenase activity"/>
    <property type="evidence" value="ECO:0007669"/>
    <property type="project" value="TreeGrafter"/>
</dbReference>
<dbReference type="GO" id="GO:0009026">
    <property type="term" value="F:tagaturonate reductase activity"/>
    <property type="evidence" value="ECO:0007669"/>
    <property type="project" value="UniProtKB-UniRule"/>
</dbReference>
<dbReference type="GO" id="GO:0019698">
    <property type="term" value="P:D-galacturonate catabolic process"/>
    <property type="evidence" value="ECO:0007669"/>
    <property type="project" value="TreeGrafter"/>
</dbReference>
<dbReference type="GO" id="GO:0019592">
    <property type="term" value="P:mannitol catabolic process"/>
    <property type="evidence" value="ECO:0007669"/>
    <property type="project" value="TreeGrafter"/>
</dbReference>
<dbReference type="FunFam" id="3.40.50.720:FF:000153">
    <property type="entry name" value="Altronate oxidoreductase"/>
    <property type="match status" value="1"/>
</dbReference>
<dbReference type="Gene3D" id="1.10.1040.10">
    <property type="entry name" value="N-(1-d-carboxylethyl)-l-norvaline Dehydrogenase, domain 2"/>
    <property type="match status" value="1"/>
</dbReference>
<dbReference type="Gene3D" id="3.40.50.720">
    <property type="entry name" value="NAD(P)-binding Rossmann-like Domain"/>
    <property type="match status" value="1"/>
</dbReference>
<dbReference type="HAMAP" id="MF_00670">
    <property type="entry name" value="Altron_oxidoreduct"/>
    <property type="match status" value="1"/>
</dbReference>
<dbReference type="InterPro" id="IPR008927">
    <property type="entry name" value="6-PGluconate_DH-like_C_sf"/>
</dbReference>
<dbReference type="InterPro" id="IPR013328">
    <property type="entry name" value="6PGD_dom2"/>
</dbReference>
<dbReference type="InterPro" id="IPR023668">
    <property type="entry name" value="Altronate_OxRdtase"/>
</dbReference>
<dbReference type="InterPro" id="IPR013118">
    <property type="entry name" value="Mannitol_DH_C"/>
</dbReference>
<dbReference type="InterPro" id="IPR013131">
    <property type="entry name" value="Mannitol_DH_N"/>
</dbReference>
<dbReference type="InterPro" id="IPR036291">
    <property type="entry name" value="NAD(P)-bd_dom_sf"/>
</dbReference>
<dbReference type="NCBIfam" id="NF002969">
    <property type="entry name" value="PRK03643.1"/>
    <property type="match status" value="1"/>
</dbReference>
<dbReference type="PANTHER" id="PTHR30524:SF0">
    <property type="entry name" value="ALTRONATE OXIDOREDUCTASE-RELATED"/>
    <property type="match status" value="1"/>
</dbReference>
<dbReference type="PANTHER" id="PTHR30524">
    <property type="entry name" value="MANNITOL-1-PHOSPHATE 5-DEHYDROGENASE"/>
    <property type="match status" value="1"/>
</dbReference>
<dbReference type="Pfam" id="PF01232">
    <property type="entry name" value="Mannitol_dh"/>
    <property type="match status" value="1"/>
</dbReference>
<dbReference type="Pfam" id="PF08125">
    <property type="entry name" value="Mannitol_dh_C"/>
    <property type="match status" value="1"/>
</dbReference>
<dbReference type="SUPFAM" id="SSF48179">
    <property type="entry name" value="6-phosphogluconate dehydrogenase C-terminal domain-like"/>
    <property type="match status" value="1"/>
</dbReference>
<dbReference type="SUPFAM" id="SSF51735">
    <property type="entry name" value="NAD(P)-binding Rossmann-fold domains"/>
    <property type="match status" value="1"/>
</dbReference>
<organism>
    <name type="scientific">Cronobacter sakazakii (strain ATCC BAA-894)</name>
    <name type="common">Enterobacter sakazakii</name>
    <dbReference type="NCBI Taxonomy" id="290339"/>
    <lineage>
        <taxon>Bacteria</taxon>
        <taxon>Pseudomonadati</taxon>
        <taxon>Pseudomonadota</taxon>
        <taxon>Gammaproteobacteria</taxon>
        <taxon>Enterobacterales</taxon>
        <taxon>Enterobacteriaceae</taxon>
        <taxon>Cronobacter</taxon>
    </lineage>
</organism>
<proteinExistence type="inferred from homology"/>
<accession>A7MPR2</accession>
<keyword id="KW-0520">NAD</keyword>
<keyword id="KW-0560">Oxidoreductase</keyword>
<keyword id="KW-1185">Reference proteome</keyword>
<sequence length="483" mass="54430">MKTLNRRDFPGALWPERIIQFGEGNFLRAFIDWQVDLLNEHTDLNAGVVVVRPIASDFPPSLSTQDGLYTTIIRGLNEKGEAVSESRLIRSVNREISVYAQYDEFLKLAHNPDIRFVFSNTTEAGISYHAGDQFDDAPAVSYPAKLTRLLFERFSHFDGAQDKGWVIIPCELIDYNGEALRELVLRYAHEWALPAAFTTWLESANSFCSTLVDRIVTGYPRDEVAQLEESLGYHDAFLDTAEHFYLFVIQGPQWLARELRLDKLPLNVLIVDDIKPYKARKVAILNGAHTALVPVAFLAGLNTVGEAMNDAQICAFVERAIHDEIIPVLDLPRNELESFADAVVSRFRNPYIKHQLLSIALNGMTKFRTRILPQLLAGQAQMGTLPPRLTFALAALIAFYRGERNGEGYPLQDDAHWLARFEQLWTQRGDNTITLRELVDAVLSDCEHWEQDLTAVPGLAAQVTRDLDAILNQGMRHAVAPLC</sequence>
<evidence type="ECO:0000255" key="1">
    <source>
        <dbReference type="HAMAP-Rule" id="MF_00670"/>
    </source>
</evidence>
<protein>
    <recommendedName>
        <fullName evidence="1">Altronate oxidoreductase</fullName>
        <ecNumber evidence="1">1.1.1.58</ecNumber>
    </recommendedName>
    <alternativeName>
        <fullName evidence="1">Tagaturonate dehydrogenase</fullName>
    </alternativeName>
    <alternativeName>
        <fullName evidence="1">Tagaturonate reductase</fullName>
    </alternativeName>
</protein>
<name>UXAB_CROS8</name>
<reference key="1">
    <citation type="journal article" date="2010" name="PLoS ONE">
        <title>Genome sequence of Cronobacter sakazakii BAA-894 and comparative genomic hybridization analysis with other Cronobacter species.</title>
        <authorList>
            <person name="Kucerova E."/>
            <person name="Clifton S.W."/>
            <person name="Xia X.Q."/>
            <person name="Long F."/>
            <person name="Porwollik S."/>
            <person name="Fulton L."/>
            <person name="Fronick C."/>
            <person name="Minx P."/>
            <person name="Kyung K."/>
            <person name="Warren W."/>
            <person name="Fulton R."/>
            <person name="Feng D."/>
            <person name="Wollam A."/>
            <person name="Shah N."/>
            <person name="Bhonagiri V."/>
            <person name="Nash W.E."/>
            <person name="Hallsworth-Pepin K."/>
            <person name="Wilson R.K."/>
            <person name="McClelland M."/>
            <person name="Forsythe S.J."/>
        </authorList>
    </citation>
    <scope>NUCLEOTIDE SEQUENCE [LARGE SCALE GENOMIC DNA]</scope>
    <source>
        <strain>ATCC BAA-894</strain>
    </source>
</reference>
<comment type="catalytic activity">
    <reaction evidence="1">
        <text>D-altronate + NAD(+) = keto-D-tagaturonate + NADH + H(+)</text>
        <dbReference type="Rhea" id="RHEA:17813"/>
        <dbReference type="ChEBI" id="CHEBI:15378"/>
        <dbReference type="ChEBI" id="CHEBI:17360"/>
        <dbReference type="ChEBI" id="CHEBI:17886"/>
        <dbReference type="ChEBI" id="CHEBI:57540"/>
        <dbReference type="ChEBI" id="CHEBI:57945"/>
        <dbReference type="EC" id="1.1.1.58"/>
    </reaction>
</comment>
<comment type="pathway">
    <text evidence="1">Carbohydrate metabolism; pentose and glucuronate interconversion.</text>
</comment>
<comment type="similarity">
    <text evidence="1">Belongs to the mannitol dehydrogenase family. UxaB subfamily.</text>
</comment>
<gene>
    <name evidence="1" type="primary">uxaB</name>
    <name type="ordered locus">ESA_01824</name>
</gene>